<feature type="chain" id="PRO_1000094232" description="2-C-methyl-D-erythritol 2,4-cyclodiphosphate synthase">
    <location>
        <begin position="1"/>
        <end position="160"/>
    </location>
</feature>
<feature type="binding site" evidence="1">
    <location>
        <begin position="12"/>
        <end position="14"/>
    </location>
    <ligand>
        <name>4-CDP-2-C-methyl-D-erythritol 2-phosphate</name>
        <dbReference type="ChEBI" id="CHEBI:57919"/>
    </ligand>
</feature>
<feature type="binding site" evidence="1">
    <location>
        <position position="12"/>
    </location>
    <ligand>
        <name>a divalent metal cation</name>
        <dbReference type="ChEBI" id="CHEBI:60240"/>
    </ligand>
</feature>
<feature type="binding site" evidence="1">
    <location>
        <position position="14"/>
    </location>
    <ligand>
        <name>a divalent metal cation</name>
        <dbReference type="ChEBI" id="CHEBI:60240"/>
    </ligand>
</feature>
<feature type="binding site" evidence="1">
    <location>
        <begin position="38"/>
        <end position="39"/>
    </location>
    <ligand>
        <name>4-CDP-2-C-methyl-D-erythritol 2-phosphate</name>
        <dbReference type="ChEBI" id="CHEBI:57919"/>
    </ligand>
</feature>
<feature type="binding site" evidence="1">
    <location>
        <position position="46"/>
    </location>
    <ligand>
        <name>a divalent metal cation</name>
        <dbReference type="ChEBI" id="CHEBI:60240"/>
    </ligand>
</feature>
<feature type="binding site" evidence="1">
    <location>
        <begin position="60"/>
        <end position="62"/>
    </location>
    <ligand>
        <name>4-CDP-2-C-methyl-D-erythritol 2-phosphate</name>
        <dbReference type="ChEBI" id="CHEBI:57919"/>
    </ligand>
</feature>
<feature type="binding site" evidence="1">
    <location>
        <begin position="65"/>
        <end position="69"/>
    </location>
    <ligand>
        <name>4-CDP-2-C-methyl-D-erythritol 2-phosphate</name>
        <dbReference type="ChEBI" id="CHEBI:57919"/>
    </ligand>
</feature>
<feature type="binding site" evidence="1">
    <location>
        <begin position="136"/>
        <end position="139"/>
    </location>
    <ligand>
        <name>4-CDP-2-C-methyl-D-erythritol 2-phosphate</name>
        <dbReference type="ChEBI" id="CHEBI:57919"/>
    </ligand>
</feature>
<feature type="binding site" evidence="1">
    <location>
        <position position="143"/>
    </location>
    <ligand>
        <name>4-CDP-2-C-methyl-D-erythritol 2-phosphate</name>
        <dbReference type="ChEBI" id="CHEBI:57919"/>
    </ligand>
</feature>
<feature type="binding site" evidence="1">
    <location>
        <position position="146"/>
    </location>
    <ligand>
        <name>4-CDP-2-C-methyl-D-erythritol 2-phosphate</name>
        <dbReference type="ChEBI" id="CHEBI:57919"/>
    </ligand>
</feature>
<feature type="site" description="Transition state stabilizer" evidence="1">
    <location>
        <position position="38"/>
    </location>
</feature>
<feature type="site" description="Transition state stabilizer" evidence="1">
    <location>
        <position position="137"/>
    </location>
</feature>
<sequence length="160" mass="17375">MVAQIRIGQGMDVHAFEEGNFVTLAGVQIPHTHGLKAHSDGDVVLHALCDALLGALALGDIGQHFPDTDPEFKGADSRVLLKHVYQLILDRGYHLNNADITVACERPKLAKYNLEMRQSIADVLNVDLNQISIKATTTEKLGFTGRQEGILATATVLISH</sequence>
<gene>
    <name evidence="1" type="primary">ispF</name>
    <name type="ordered locus">ACICU_02105</name>
</gene>
<proteinExistence type="inferred from homology"/>
<keyword id="KW-0414">Isoprene biosynthesis</keyword>
<keyword id="KW-0456">Lyase</keyword>
<keyword id="KW-0479">Metal-binding</keyword>
<protein>
    <recommendedName>
        <fullName evidence="1">2-C-methyl-D-erythritol 2,4-cyclodiphosphate synthase</fullName>
        <shortName evidence="1">MECDP-synthase</shortName>
        <shortName evidence="1">MECPP-synthase</shortName>
        <shortName evidence="1">MECPS</shortName>
        <ecNumber evidence="1">4.6.1.12</ecNumber>
    </recommendedName>
</protein>
<name>ISPF_ACIBC</name>
<comment type="function">
    <text evidence="1">Involved in the biosynthesis of isopentenyl diphosphate (IPP) and dimethylallyl diphosphate (DMAPP), two major building blocks of isoprenoid compounds. Catalyzes the conversion of 4-diphosphocytidyl-2-C-methyl-D-erythritol 2-phosphate (CDP-ME2P) to 2-C-methyl-D-erythritol 2,4-cyclodiphosphate (ME-CPP) with a corresponding release of cytidine 5-monophosphate (CMP).</text>
</comment>
<comment type="catalytic activity">
    <reaction evidence="1">
        <text>4-CDP-2-C-methyl-D-erythritol 2-phosphate = 2-C-methyl-D-erythritol 2,4-cyclic diphosphate + CMP</text>
        <dbReference type="Rhea" id="RHEA:23864"/>
        <dbReference type="ChEBI" id="CHEBI:57919"/>
        <dbReference type="ChEBI" id="CHEBI:58483"/>
        <dbReference type="ChEBI" id="CHEBI:60377"/>
        <dbReference type="EC" id="4.6.1.12"/>
    </reaction>
</comment>
<comment type="cofactor">
    <cofactor evidence="1">
        <name>a divalent metal cation</name>
        <dbReference type="ChEBI" id="CHEBI:60240"/>
    </cofactor>
    <text evidence="1">Binds 1 divalent metal cation per subunit.</text>
</comment>
<comment type="pathway">
    <text evidence="1">Isoprenoid biosynthesis; isopentenyl diphosphate biosynthesis via DXP pathway; isopentenyl diphosphate from 1-deoxy-D-xylulose 5-phosphate: step 4/6.</text>
</comment>
<comment type="subunit">
    <text evidence="1">Homotrimer.</text>
</comment>
<comment type="similarity">
    <text evidence="1">Belongs to the IspF family.</text>
</comment>
<evidence type="ECO:0000255" key="1">
    <source>
        <dbReference type="HAMAP-Rule" id="MF_00107"/>
    </source>
</evidence>
<organism>
    <name type="scientific">Acinetobacter baumannii (strain ACICU)</name>
    <dbReference type="NCBI Taxonomy" id="405416"/>
    <lineage>
        <taxon>Bacteria</taxon>
        <taxon>Pseudomonadati</taxon>
        <taxon>Pseudomonadota</taxon>
        <taxon>Gammaproteobacteria</taxon>
        <taxon>Moraxellales</taxon>
        <taxon>Moraxellaceae</taxon>
        <taxon>Acinetobacter</taxon>
        <taxon>Acinetobacter calcoaceticus/baumannii complex</taxon>
    </lineage>
</organism>
<dbReference type="EC" id="4.6.1.12" evidence="1"/>
<dbReference type="EMBL" id="CP000863">
    <property type="protein sequence ID" value="ACC57417.1"/>
    <property type="molecule type" value="Genomic_DNA"/>
</dbReference>
<dbReference type="RefSeq" id="WP_000226512.1">
    <property type="nucleotide sequence ID" value="NZ_CP031380.1"/>
</dbReference>
<dbReference type="SMR" id="B2I336"/>
<dbReference type="GeneID" id="92894244"/>
<dbReference type="KEGG" id="abc:ACICU_02105"/>
<dbReference type="HOGENOM" id="CLU_084630_2_0_6"/>
<dbReference type="UniPathway" id="UPA00056">
    <property type="reaction ID" value="UER00095"/>
</dbReference>
<dbReference type="Proteomes" id="UP000008839">
    <property type="component" value="Chromosome"/>
</dbReference>
<dbReference type="GO" id="GO:0008685">
    <property type="term" value="F:2-C-methyl-D-erythritol 2,4-cyclodiphosphate synthase activity"/>
    <property type="evidence" value="ECO:0007669"/>
    <property type="project" value="UniProtKB-UniRule"/>
</dbReference>
<dbReference type="GO" id="GO:0046872">
    <property type="term" value="F:metal ion binding"/>
    <property type="evidence" value="ECO:0007669"/>
    <property type="project" value="UniProtKB-KW"/>
</dbReference>
<dbReference type="GO" id="GO:0019288">
    <property type="term" value="P:isopentenyl diphosphate biosynthetic process, methylerythritol 4-phosphate pathway"/>
    <property type="evidence" value="ECO:0007669"/>
    <property type="project" value="UniProtKB-UniRule"/>
</dbReference>
<dbReference type="GO" id="GO:0016114">
    <property type="term" value="P:terpenoid biosynthetic process"/>
    <property type="evidence" value="ECO:0007669"/>
    <property type="project" value="InterPro"/>
</dbReference>
<dbReference type="CDD" id="cd00554">
    <property type="entry name" value="MECDP_synthase"/>
    <property type="match status" value="1"/>
</dbReference>
<dbReference type="FunFam" id="3.30.1330.50:FF:000001">
    <property type="entry name" value="2-C-methyl-D-erythritol 2,4-cyclodiphosphate synthase"/>
    <property type="match status" value="1"/>
</dbReference>
<dbReference type="Gene3D" id="3.30.1330.50">
    <property type="entry name" value="2-C-methyl-D-erythritol 2,4-cyclodiphosphate synthase"/>
    <property type="match status" value="1"/>
</dbReference>
<dbReference type="HAMAP" id="MF_00107">
    <property type="entry name" value="IspF"/>
    <property type="match status" value="1"/>
</dbReference>
<dbReference type="InterPro" id="IPR003526">
    <property type="entry name" value="MECDP_synthase"/>
</dbReference>
<dbReference type="InterPro" id="IPR020555">
    <property type="entry name" value="MECDP_synthase_CS"/>
</dbReference>
<dbReference type="InterPro" id="IPR036571">
    <property type="entry name" value="MECDP_synthase_sf"/>
</dbReference>
<dbReference type="NCBIfam" id="TIGR00151">
    <property type="entry name" value="ispF"/>
    <property type="match status" value="1"/>
</dbReference>
<dbReference type="PANTHER" id="PTHR43181">
    <property type="entry name" value="2-C-METHYL-D-ERYTHRITOL 2,4-CYCLODIPHOSPHATE SYNTHASE, CHLOROPLASTIC"/>
    <property type="match status" value="1"/>
</dbReference>
<dbReference type="PANTHER" id="PTHR43181:SF1">
    <property type="entry name" value="2-C-METHYL-D-ERYTHRITOL 2,4-CYCLODIPHOSPHATE SYNTHASE, CHLOROPLASTIC"/>
    <property type="match status" value="1"/>
</dbReference>
<dbReference type="Pfam" id="PF02542">
    <property type="entry name" value="YgbB"/>
    <property type="match status" value="1"/>
</dbReference>
<dbReference type="SUPFAM" id="SSF69765">
    <property type="entry name" value="IpsF-like"/>
    <property type="match status" value="1"/>
</dbReference>
<dbReference type="PROSITE" id="PS01350">
    <property type="entry name" value="ISPF"/>
    <property type="match status" value="1"/>
</dbReference>
<reference key="1">
    <citation type="journal article" date="2008" name="Antimicrob. Agents Chemother.">
        <title>Whole-genome pyrosequencing of an epidemic multidrug-resistant Acinetobacter baumannii strain belonging to the European clone II group.</title>
        <authorList>
            <person name="Iacono M."/>
            <person name="Villa L."/>
            <person name="Fortini D."/>
            <person name="Bordoni R."/>
            <person name="Imperi F."/>
            <person name="Bonnal R.J."/>
            <person name="Sicheritz-Ponten T."/>
            <person name="De Bellis G."/>
            <person name="Visca P."/>
            <person name="Cassone A."/>
            <person name="Carattoli A."/>
        </authorList>
    </citation>
    <scope>NUCLEOTIDE SEQUENCE [LARGE SCALE GENOMIC DNA]</scope>
    <source>
        <strain>ACICU</strain>
    </source>
</reference>
<accession>B2I336</accession>